<proteinExistence type="inferred from homology"/>
<organism>
    <name type="scientific">Escherichia coli O17:K52:H18 (strain UMN026 / ExPEC)</name>
    <dbReference type="NCBI Taxonomy" id="585056"/>
    <lineage>
        <taxon>Bacteria</taxon>
        <taxon>Pseudomonadati</taxon>
        <taxon>Pseudomonadota</taxon>
        <taxon>Gammaproteobacteria</taxon>
        <taxon>Enterobacterales</taxon>
        <taxon>Enterobacteriaceae</taxon>
        <taxon>Escherichia</taxon>
    </lineage>
</organism>
<accession>B7N6Y0</accession>
<protein>
    <recommendedName>
        <fullName evidence="1">Adenylyl-sulfate kinase</fullName>
        <ecNumber evidence="1">2.7.1.25</ecNumber>
    </recommendedName>
    <alternativeName>
        <fullName evidence="1">APS kinase</fullName>
    </alternativeName>
    <alternativeName>
        <fullName evidence="1">ATP adenosine-5'-phosphosulfate 3'-phosphotransferase</fullName>
    </alternativeName>
    <alternativeName>
        <fullName evidence="1">Adenosine-5'-phosphosulfate kinase</fullName>
    </alternativeName>
</protein>
<evidence type="ECO:0000255" key="1">
    <source>
        <dbReference type="HAMAP-Rule" id="MF_00065"/>
    </source>
</evidence>
<comment type="function">
    <text evidence="1">Catalyzes the synthesis of activated sulfate.</text>
</comment>
<comment type="catalytic activity">
    <reaction evidence="1">
        <text>adenosine 5'-phosphosulfate + ATP = 3'-phosphoadenylyl sulfate + ADP + H(+)</text>
        <dbReference type="Rhea" id="RHEA:24152"/>
        <dbReference type="ChEBI" id="CHEBI:15378"/>
        <dbReference type="ChEBI" id="CHEBI:30616"/>
        <dbReference type="ChEBI" id="CHEBI:58243"/>
        <dbReference type="ChEBI" id="CHEBI:58339"/>
        <dbReference type="ChEBI" id="CHEBI:456216"/>
        <dbReference type="EC" id="2.7.1.25"/>
    </reaction>
</comment>
<comment type="pathway">
    <text evidence="1">Sulfur metabolism; hydrogen sulfide biosynthesis; sulfite from sulfate: step 2/3.</text>
</comment>
<comment type="similarity">
    <text evidence="1">Belongs to the APS kinase family.</text>
</comment>
<reference key="1">
    <citation type="journal article" date="2009" name="PLoS Genet.">
        <title>Organised genome dynamics in the Escherichia coli species results in highly diverse adaptive paths.</title>
        <authorList>
            <person name="Touchon M."/>
            <person name="Hoede C."/>
            <person name="Tenaillon O."/>
            <person name="Barbe V."/>
            <person name="Baeriswyl S."/>
            <person name="Bidet P."/>
            <person name="Bingen E."/>
            <person name="Bonacorsi S."/>
            <person name="Bouchier C."/>
            <person name="Bouvet O."/>
            <person name="Calteau A."/>
            <person name="Chiapello H."/>
            <person name="Clermont O."/>
            <person name="Cruveiller S."/>
            <person name="Danchin A."/>
            <person name="Diard M."/>
            <person name="Dossat C."/>
            <person name="Karoui M.E."/>
            <person name="Frapy E."/>
            <person name="Garry L."/>
            <person name="Ghigo J.M."/>
            <person name="Gilles A.M."/>
            <person name="Johnson J."/>
            <person name="Le Bouguenec C."/>
            <person name="Lescat M."/>
            <person name="Mangenot S."/>
            <person name="Martinez-Jehanne V."/>
            <person name="Matic I."/>
            <person name="Nassif X."/>
            <person name="Oztas S."/>
            <person name="Petit M.A."/>
            <person name="Pichon C."/>
            <person name="Rouy Z."/>
            <person name="Ruf C.S."/>
            <person name="Schneider D."/>
            <person name="Tourret J."/>
            <person name="Vacherie B."/>
            <person name="Vallenet D."/>
            <person name="Medigue C."/>
            <person name="Rocha E.P.C."/>
            <person name="Denamur E."/>
        </authorList>
    </citation>
    <scope>NUCLEOTIDE SEQUENCE [LARGE SCALE GENOMIC DNA]</scope>
    <source>
        <strain>UMN026 / ExPEC</strain>
    </source>
</reference>
<gene>
    <name evidence="1" type="primary">cysC</name>
    <name type="ordered locus">ECUMN_3074</name>
</gene>
<name>CYSC_ECOLU</name>
<dbReference type="EC" id="2.7.1.25" evidence="1"/>
<dbReference type="EMBL" id="CU928163">
    <property type="protein sequence ID" value="CAR14241.1"/>
    <property type="molecule type" value="Genomic_DNA"/>
</dbReference>
<dbReference type="RefSeq" id="WP_001173673.1">
    <property type="nucleotide sequence ID" value="NC_011751.1"/>
</dbReference>
<dbReference type="RefSeq" id="YP_002413763.1">
    <property type="nucleotide sequence ID" value="NC_011751.1"/>
</dbReference>
<dbReference type="SMR" id="B7N6Y0"/>
<dbReference type="STRING" id="585056.ECUMN_3074"/>
<dbReference type="GeneID" id="93779256"/>
<dbReference type="KEGG" id="eum:ECUMN_3074"/>
<dbReference type="PATRIC" id="fig|585056.7.peg.3250"/>
<dbReference type="HOGENOM" id="CLU_046932_1_0_6"/>
<dbReference type="UniPathway" id="UPA00140">
    <property type="reaction ID" value="UER00205"/>
</dbReference>
<dbReference type="Proteomes" id="UP000007097">
    <property type="component" value="Chromosome"/>
</dbReference>
<dbReference type="GO" id="GO:0004020">
    <property type="term" value="F:adenylylsulfate kinase activity"/>
    <property type="evidence" value="ECO:0007669"/>
    <property type="project" value="UniProtKB-UniRule"/>
</dbReference>
<dbReference type="GO" id="GO:0005524">
    <property type="term" value="F:ATP binding"/>
    <property type="evidence" value="ECO:0007669"/>
    <property type="project" value="UniProtKB-UniRule"/>
</dbReference>
<dbReference type="GO" id="GO:0070814">
    <property type="term" value="P:hydrogen sulfide biosynthetic process"/>
    <property type="evidence" value="ECO:0007669"/>
    <property type="project" value="UniProtKB-UniRule"/>
</dbReference>
<dbReference type="GO" id="GO:0000103">
    <property type="term" value="P:sulfate assimilation"/>
    <property type="evidence" value="ECO:0007669"/>
    <property type="project" value="UniProtKB-UniRule"/>
</dbReference>
<dbReference type="CDD" id="cd02027">
    <property type="entry name" value="APSK"/>
    <property type="match status" value="1"/>
</dbReference>
<dbReference type="FunFam" id="3.40.50.300:FF:000212">
    <property type="entry name" value="Adenylyl-sulfate kinase"/>
    <property type="match status" value="1"/>
</dbReference>
<dbReference type="Gene3D" id="3.40.50.300">
    <property type="entry name" value="P-loop containing nucleotide triphosphate hydrolases"/>
    <property type="match status" value="1"/>
</dbReference>
<dbReference type="HAMAP" id="MF_00065">
    <property type="entry name" value="Adenylyl_sulf_kinase"/>
    <property type="match status" value="1"/>
</dbReference>
<dbReference type="InterPro" id="IPR002891">
    <property type="entry name" value="APS_kinase"/>
</dbReference>
<dbReference type="InterPro" id="IPR027417">
    <property type="entry name" value="P-loop_NTPase"/>
</dbReference>
<dbReference type="NCBIfam" id="TIGR00455">
    <property type="entry name" value="apsK"/>
    <property type="match status" value="1"/>
</dbReference>
<dbReference type="NCBIfam" id="NF003013">
    <property type="entry name" value="PRK03846.1"/>
    <property type="match status" value="1"/>
</dbReference>
<dbReference type="PANTHER" id="PTHR11055:SF63">
    <property type="entry name" value="ADENYLYL-SULFATE KINASE 1, CHLOROPLASTIC"/>
    <property type="match status" value="1"/>
</dbReference>
<dbReference type="PANTHER" id="PTHR11055">
    <property type="entry name" value="BIFUNCTIONAL 3'-PHOSPHOADENOSINE 5'-PHOSPHOSULFATE SYNTHASE"/>
    <property type="match status" value="1"/>
</dbReference>
<dbReference type="Pfam" id="PF01583">
    <property type="entry name" value="APS_kinase"/>
    <property type="match status" value="1"/>
</dbReference>
<dbReference type="SUPFAM" id="SSF52540">
    <property type="entry name" value="P-loop containing nucleoside triphosphate hydrolases"/>
    <property type="match status" value="1"/>
</dbReference>
<feature type="chain" id="PRO_1000116969" description="Adenylyl-sulfate kinase">
    <location>
        <begin position="1"/>
        <end position="201"/>
    </location>
</feature>
<feature type="active site" description="Phosphoserine intermediate" evidence="1">
    <location>
        <position position="109"/>
    </location>
</feature>
<feature type="binding site" evidence="1">
    <location>
        <begin position="35"/>
        <end position="42"/>
    </location>
    <ligand>
        <name>ATP</name>
        <dbReference type="ChEBI" id="CHEBI:30616"/>
    </ligand>
</feature>
<keyword id="KW-0067">ATP-binding</keyword>
<keyword id="KW-0418">Kinase</keyword>
<keyword id="KW-0547">Nucleotide-binding</keyword>
<keyword id="KW-0597">Phosphoprotein</keyword>
<keyword id="KW-0808">Transferase</keyword>
<sequence length="201" mass="22321">MALHDENVVWHSHPVTVQQRELHHGHRGVVLWFTGLSGSGKSTVAGALEEALHKLGVSTYLLDGDNVRHGLCSDLGFSDADRKENIRRVGEVANLMVEAGLVVLTAFISPHRAERQMVRERVGEGRFIEVFVDTPLAICEARDPKGLYKKARAGELRNFTGIDSVYEAPESAEIHLNGEQLVTNLVQQLLDLLRQNDIIRS</sequence>